<keyword id="KW-0479">Metal-binding</keyword>
<keyword id="KW-0520">NAD</keyword>
<keyword id="KW-0521">NADP</keyword>
<keyword id="KW-0558">Oxidation</keyword>
<keyword id="KW-0560">Oxidoreductase</keyword>
<keyword id="KW-0630">Potassium</keyword>
<reference key="1">
    <citation type="submission" date="2006-05" db="EMBL/GenBank/DDBJ databases">
        <title>Complete sequence of chromosome 2 of Burkholderia cenocepacia AU 1054.</title>
        <authorList>
            <consortium name="US DOE Joint Genome Institute"/>
            <person name="Copeland A."/>
            <person name="Lucas S."/>
            <person name="Lapidus A."/>
            <person name="Barry K."/>
            <person name="Detter J.C."/>
            <person name="Glavina del Rio T."/>
            <person name="Hammon N."/>
            <person name="Israni S."/>
            <person name="Dalin E."/>
            <person name="Tice H."/>
            <person name="Pitluck S."/>
            <person name="Chain P."/>
            <person name="Malfatti S."/>
            <person name="Shin M."/>
            <person name="Vergez L."/>
            <person name="Schmutz J."/>
            <person name="Larimer F."/>
            <person name="Land M."/>
            <person name="Hauser L."/>
            <person name="Kyrpides N."/>
            <person name="Lykidis A."/>
            <person name="LiPuma J.J."/>
            <person name="Konstantinidis K."/>
            <person name="Tiedje J.M."/>
            <person name="Richardson P."/>
        </authorList>
    </citation>
    <scope>NUCLEOTIDE SEQUENCE [LARGE SCALE GENOMIC DNA]</scope>
    <source>
        <strain>AU 1054</strain>
    </source>
</reference>
<sequence length="489" mass="52312">MSVYGLQRLYIGGGYVDATSGKTFDTFDPATGELLAQVQQASAADVDRAVASAQEGQREWAAMTAMQRSRILRRAVELLRERNDELAAIETRDTGKPIGETLAVDIVTGADVIEYYAGLATAIEGLQVPLRAESFVYTRREPLGVCAGIGAWNYPIQIACWKTAPALAAGNAMVFKPSEVTPLTALKLAEIYTEAGVPAGVFNVVQGDGSVGALLTGHPDIAKVSFTGGVETGKKVMSLAGASSLKEVTMELGGKSPLIVFDDADLDRAADIAVTANFFSSGQVCTNGTRVFVHRSIKDAFTQKVLERVKRIRVGKPTDADTNFGPLVSAAQLDKVLGFIESGKAEGAKLLAGGTRLTDGHFGSGQYVAPTVFGDCRDDMKIVREEIFGPVMSILEFESEDEVIARANDTHYGLAAGVVTENLSRAHRAIHRLEAGICWINTWGESPAEMPVGGYKQSGVGRENGITTLEHYTRIKSVQVELGRYNPVF</sequence>
<dbReference type="EC" id="1.2.1.8" evidence="1"/>
<dbReference type="EMBL" id="CP000379">
    <property type="protein sequence ID" value="ABF78164.1"/>
    <property type="molecule type" value="Genomic_DNA"/>
</dbReference>
<dbReference type="SMR" id="Q1BQE1"/>
<dbReference type="HOGENOM" id="CLU_005391_1_0_4"/>
<dbReference type="UniPathway" id="UPA00529">
    <property type="reaction ID" value="UER00386"/>
</dbReference>
<dbReference type="GO" id="GO:0008802">
    <property type="term" value="F:betaine-aldehyde dehydrogenase (NAD+) activity"/>
    <property type="evidence" value="ECO:0007669"/>
    <property type="project" value="UniProtKB-UniRule"/>
</dbReference>
<dbReference type="GO" id="GO:0046872">
    <property type="term" value="F:metal ion binding"/>
    <property type="evidence" value="ECO:0007669"/>
    <property type="project" value="UniProtKB-KW"/>
</dbReference>
<dbReference type="GO" id="GO:0019285">
    <property type="term" value="P:glycine betaine biosynthetic process from choline"/>
    <property type="evidence" value="ECO:0007669"/>
    <property type="project" value="UniProtKB-UniRule"/>
</dbReference>
<dbReference type="CDD" id="cd07090">
    <property type="entry name" value="ALDH_F9_TMBADH"/>
    <property type="match status" value="1"/>
</dbReference>
<dbReference type="FunFam" id="3.40.309.10:FF:000014">
    <property type="entry name" value="NAD/NADP-dependent betaine aldehyde dehydrogenase"/>
    <property type="match status" value="1"/>
</dbReference>
<dbReference type="FunFam" id="3.40.605.10:FF:000007">
    <property type="entry name" value="NAD/NADP-dependent betaine aldehyde dehydrogenase"/>
    <property type="match status" value="1"/>
</dbReference>
<dbReference type="Gene3D" id="3.40.605.10">
    <property type="entry name" value="Aldehyde Dehydrogenase, Chain A, domain 1"/>
    <property type="match status" value="1"/>
</dbReference>
<dbReference type="Gene3D" id="3.40.309.10">
    <property type="entry name" value="Aldehyde Dehydrogenase, Chain A, domain 2"/>
    <property type="match status" value="1"/>
</dbReference>
<dbReference type="HAMAP" id="MF_00804">
    <property type="entry name" value="BADH"/>
    <property type="match status" value="1"/>
</dbReference>
<dbReference type="InterPro" id="IPR016161">
    <property type="entry name" value="Ald_DH/histidinol_DH"/>
</dbReference>
<dbReference type="InterPro" id="IPR016163">
    <property type="entry name" value="Ald_DH_C"/>
</dbReference>
<dbReference type="InterPro" id="IPR016160">
    <property type="entry name" value="Ald_DH_CS_CYS"/>
</dbReference>
<dbReference type="InterPro" id="IPR029510">
    <property type="entry name" value="Ald_DH_CS_GLU"/>
</dbReference>
<dbReference type="InterPro" id="IPR016162">
    <property type="entry name" value="Ald_DH_N"/>
</dbReference>
<dbReference type="InterPro" id="IPR015590">
    <property type="entry name" value="Aldehyde_DH_dom"/>
</dbReference>
<dbReference type="InterPro" id="IPR011264">
    <property type="entry name" value="BADH"/>
</dbReference>
<dbReference type="NCBIfam" id="TIGR01804">
    <property type="entry name" value="BADH"/>
    <property type="match status" value="1"/>
</dbReference>
<dbReference type="NCBIfam" id="NF009725">
    <property type="entry name" value="PRK13252.1"/>
    <property type="match status" value="1"/>
</dbReference>
<dbReference type="PANTHER" id="PTHR11699">
    <property type="entry name" value="ALDEHYDE DEHYDROGENASE-RELATED"/>
    <property type="match status" value="1"/>
</dbReference>
<dbReference type="Pfam" id="PF00171">
    <property type="entry name" value="Aldedh"/>
    <property type="match status" value="1"/>
</dbReference>
<dbReference type="SUPFAM" id="SSF53720">
    <property type="entry name" value="ALDH-like"/>
    <property type="match status" value="1"/>
</dbReference>
<dbReference type="PROSITE" id="PS00070">
    <property type="entry name" value="ALDEHYDE_DEHYDR_CYS"/>
    <property type="match status" value="1"/>
</dbReference>
<dbReference type="PROSITE" id="PS00687">
    <property type="entry name" value="ALDEHYDE_DEHYDR_GLU"/>
    <property type="match status" value="1"/>
</dbReference>
<evidence type="ECO:0000255" key="1">
    <source>
        <dbReference type="HAMAP-Rule" id="MF_00804"/>
    </source>
</evidence>
<gene>
    <name evidence="1" type="primary">betB</name>
    <name type="ordered locus">Bcen_3269</name>
</gene>
<comment type="function">
    <text evidence="1">Involved in the biosynthesis of the osmoprotectant glycine betaine. Catalyzes the irreversible oxidation of betaine aldehyde to the corresponding acid.</text>
</comment>
<comment type="catalytic activity">
    <reaction evidence="1">
        <text>betaine aldehyde + NAD(+) + H2O = glycine betaine + NADH + 2 H(+)</text>
        <dbReference type="Rhea" id="RHEA:15305"/>
        <dbReference type="ChEBI" id="CHEBI:15377"/>
        <dbReference type="ChEBI" id="CHEBI:15378"/>
        <dbReference type="ChEBI" id="CHEBI:15710"/>
        <dbReference type="ChEBI" id="CHEBI:17750"/>
        <dbReference type="ChEBI" id="CHEBI:57540"/>
        <dbReference type="ChEBI" id="CHEBI:57945"/>
        <dbReference type="EC" id="1.2.1.8"/>
    </reaction>
    <physiologicalReaction direction="left-to-right" evidence="1">
        <dbReference type="Rhea" id="RHEA:15306"/>
    </physiologicalReaction>
</comment>
<comment type="cofactor">
    <cofactor evidence="1">
        <name>K(+)</name>
        <dbReference type="ChEBI" id="CHEBI:29103"/>
    </cofactor>
    <text evidence="1">Binds 2 potassium ions per subunit.</text>
</comment>
<comment type="pathway">
    <text evidence="1">Amine and polyamine biosynthesis; betaine biosynthesis via choline pathway; betaine from betaine aldehyde: step 1/1.</text>
</comment>
<comment type="subunit">
    <text evidence="1">Dimer of dimers.</text>
</comment>
<comment type="similarity">
    <text evidence="1">Belongs to the aldehyde dehydrogenase family.</text>
</comment>
<feature type="chain" id="PRO_1000047031" description="Betaine aldehyde dehydrogenase">
    <location>
        <begin position="1"/>
        <end position="489"/>
    </location>
</feature>
<feature type="active site" description="Charge relay system" evidence="1">
    <location>
        <position position="162"/>
    </location>
</feature>
<feature type="active site" description="Proton acceptor" evidence="1">
    <location>
        <position position="251"/>
    </location>
</feature>
<feature type="active site" description="Nucleophile" evidence="1">
    <location>
        <position position="285"/>
    </location>
</feature>
<feature type="active site" description="Charge relay system" evidence="1">
    <location>
        <position position="463"/>
    </location>
</feature>
<feature type="binding site" evidence="1">
    <location>
        <position position="26"/>
    </location>
    <ligand>
        <name>K(+)</name>
        <dbReference type="ChEBI" id="CHEBI:29103"/>
        <label>1</label>
    </ligand>
</feature>
<feature type="binding site" evidence="1">
    <location>
        <position position="93"/>
    </location>
    <ligand>
        <name>K(+)</name>
        <dbReference type="ChEBI" id="CHEBI:29103"/>
        <label>1</label>
    </ligand>
</feature>
<feature type="binding site" evidence="1">
    <location>
        <begin position="150"/>
        <end position="152"/>
    </location>
    <ligand>
        <name>NAD(+)</name>
        <dbReference type="ChEBI" id="CHEBI:57540"/>
    </ligand>
</feature>
<feature type="binding site" evidence="1">
    <location>
        <begin position="176"/>
        <end position="179"/>
    </location>
    <ligand>
        <name>NAD(+)</name>
        <dbReference type="ChEBI" id="CHEBI:57540"/>
    </ligand>
</feature>
<feature type="binding site" evidence="1">
    <location>
        <position position="180"/>
    </location>
    <ligand>
        <name>K(+)</name>
        <dbReference type="ChEBI" id="CHEBI:29103"/>
        <label>1</label>
    </ligand>
</feature>
<feature type="binding site" evidence="1">
    <location>
        <begin position="229"/>
        <end position="232"/>
    </location>
    <ligand>
        <name>NAD(+)</name>
        <dbReference type="ChEBI" id="CHEBI:57540"/>
    </ligand>
</feature>
<feature type="binding site" evidence="1">
    <location>
        <position position="245"/>
    </location>
    <ligand>
        <name>K(+)</name>
        <dbReference type="ChEBI" id="CHEBI:29103"/>
        <label>2</label>
    </ligand>
</feature>
<feature type="binding site" evidence="1">
    <location>
        <position position="253"/>
    </location>
    <ligand>
        <name>NAD(+)</name>
        <dbReference type="ChEBI" id="CHEBI:57540"/>
    </ligand>
</feature>
<feature type="binding site" description="covalent" evidence="1">
    <location>
        <position position="285"/>
    </location>
    <ligand>
        <name>NAD(+)</name>
        <dbReference type="ChEBI" id="CHEBI:57540"/>
    </ligand>
</feature>
<feature type="binding site" evidence="1">
    <location>
        <position position="386"/>
    </location>
    <ligand>
        <name>NAD(+)</name>
        <dbReference type="ChEBI" id="CHEBI:57540"/>
    </ligand>
</feature>
<feature type="binding site" evidence="1">
    <location>
        <position position="456"/>
    </location>
    <ligand>
        <name>K(+)</name>
        <dbReference type="ChEBI" id="CHEBI:29103"/>
        <label>2</label>
    </ligand>
</feature>
<feature type="binding site" evidence="1">
    <location>
        <position position="459"/>
    </location>
    <ligand>
        <name>K(+)</name>
        <dbReference type="ChEBI" id="CHEBI:29103"/>
        <label>2</label>
    </ligand>
</feature>
<feature type="site" description="Seems to be a necessary countercharge to the potassium cations" evidence="1">
    <location>
        <position position="247"/>
    </location>
</feature>
<feature type="modified residue" description="Cysteine sulfenic acid (-SOH)" evidence="1">
    <location>
        <position position="285"/>
    </location>
</feature>
<protein>
    <recommendedName>
        <fullName evidence="1">Betaine aldehyde dehydrogenase</fullName>
        <shortName evidence="1">BADH</shortName>
        <ecNumber evidence="1">1.2.1.8</ecNumber>
    </recommendedName>
</protein>
<proteinExistence type="inferred from homology"/>
<name>BETB_BURO1</name>
<organism>
    <name type="scientific">Burkholderia orbicola (strain AU 1054)</name>
    <dbReference type="NCBI Taxonomy" id="331271"/>
    <lineage>
        <taxon>Bacteria</taxon>
        <taxon>Pseudomonadati</taxon>
        <taxon>Pseudomonadota</taxon>
        <taxon>Betaproteobacteria</taxon>
        <taxon>Burkholderiales</taxon>
        <taxon>Burkholderiaceae</taxon>
        <taxon>Burkholderia</taxon>
        <taxon>Burkholderia cepacia complex</taxon>
        <taxon>Burkholderia orbicola</taxon>
    </lineage>
</organism>
<accession>Q1BQE1</accession>